<proteinExistence type="inferred from homology"/>
<accession>A8F1X5</accession>
<evidence type="ECO:0000255" key="1">
    <source>
        <dbReference type="HAMAP-Rule" id="MF_00251"/>
    </source>
</evidence>
<evidence type="ECO:0000305" key="2"/>
<feature type="chain" id="PRO_1000059035" description="Large ribosomal subunit protein bL36">
    <location>
        <begin position="1"/>
        <end position="41"/>
    </location>
</feature>
<name>RL36_RICM5</name>
<comment type="similarity">
    <text evidence="1">Belongs to the bacterial ribosomal protein bL36 family.</text>
</comment>
<dbReference type="EMBL" id="CP000683">
    <property type="protein sequence ID" value="ABV84911.1"/>
    <property type="molecule type" value="Genomic_DNA"/>
</dbReference>
<dbReference type="SMR" id="A8F1X5"/>
<dbReference type="KEGG" id="rms:RMA_0776"/>
<dbReference type="HOGENOM" id="CLU_135723_3_2_5"/>
<dbReference type="Proteomes" id="UP000001311">
    <property type="component" value="Chromosome"/>
</dbReference>
<dbReference type="GO" id="GO:1990904">
    <property type="term" value="C:ribonucleoprotein complex"/>
    <property type="evidence" value="ECO:0007669"/>
    <property type="project" value="UniProtKB-KW"/>
</dbReference>
<dbReference type="GO" id="GO:0005840">
    <property type="term" value="C:ribosome"/>
    <property type="evidence" value="ECO:0007669"/>
    <property type="project" value="UniProtKB-KW"/>
</dbReference>
<dbReference type="GO" id="GO:0003735">
    <property type="term" value="F:structural constituent of ribosome"/>
    <property type="evidence" value="ECO:0007669"/>
    <property type="project" value="InterPro"/>
</dbReference>
<dbReference type="GO" id="GO:0006412">
    <property type="term" value="P:translation"/>
    <property type="evidence" value="ECO:0007669"/>
    <property type="project" value="UniProtKB-UniRule"/>
</dbReference>
<dbReference type="HAMAP" id="MF_00251">
    <property type="entry name" value="Ribosomal_bL36"/>
    <property type="match status" value="1"/>
</dbReference>
<dbReference type="InterPro" id="IPR000473">
    <property type="entry name" value="Ribosomal_bL36"/>
</dbReference>
<dbReference type="InterPro" id="IPR035977">
    <property type="entry name" value="Ribosomal_bL36_sp"/>
</dbReference>
<dbReference type="InterPro" id="IPR047621">
    <property type="entry name" value="Ribosomal_L36_bact"/>
</dbReference>
<dbReference type="NCBIfam" id="NF002021">
    <property type="entry name" value="PRK00831.1"/>
    <property type="match status" value="1"/>
</dbReference>
<dbReference type="PANTHER" id="PTHR47781">
    <property type="entry name" value="50S RIBOSOMAL PROTEIN L36 2"/>
    <property type="match status" value="1"/>
</dbReference>
<dbReference type="PANTHER" id="PTHR47781:SF1">
    <property type="entry name" value="LARGE RIBOSOMAL SUBUNIT PROTEIN BL36B"/>
    <property type="match status" value="1"/>
</dbReference>
<dbReference type="Pfam" id="PF00444">
    <property type="entry name" value="Ribosomal_L36"/>
    <property type="match status" value="1"/>
</dbReference>
<dbReference type="SUPFAM" id="SSF57840">
    <property type="entry name" value="Ribosomal protein L36"/>
    <property type="match status" value="1"/>
</dbReference>
<dbReference type="PROSITE" id="PS00828">
    <property type="entry name" value="RIBOSOMAL_L36"/>
    <property type="match status" value="1"/>
</dbReference>
<reference key="1">
    <citation type="journal article" date="2007" name="Genome Res.">
        <title>Lateral gene transfer between obligate intracellular bacteria: evidence from the Rickettsia massiliae genome.</title>
        <authorList>
            <person name="Blanc G."/>
            <person name="Ogata H."/>
            <person name="Robert C."/>
            <person name="Audic S."/>
            <person name="Claverie J.-M."/>
            <person name="Raoult D."/>
        </authorList>
    </citation>
    <scope>NUCLEOTIDE SEQUENCE [LARGE SCALE GENOMIC DNA]</scope>
    <source>
        <strain>Mtu5</strain>
    </source>
</reference>
<keyword id="KW-0687">Ribonucleoprotein</keyword>
<keyword id="KW-0689">Ribosomal protein</keyword>
<protein>
    <recommendedName>
        <fullName evidence="1">Large ribosomal subunit protein bL36</fullName>
    </recommendedName>
    <alternativeName>
        <fullName evidence="2">50S ribosomal protein L36</fullName>
    </alternativeName>
</protein>
<gene>
    <name evidence="1" type="primary">rpmJ</name>
    <name type="ordered locus">RMA_0776</name>
</gene>
<sequence>MKVVSSLKSLKKRDKDCQIVQRRGKIFVINKKNKRFKAKQG</sequence>
<organism>
    <name type="scientific">Rickettsia massiliae (strain Mtu5)</name>
    <dbReference type="NCBI Taxonomy" id="416276"/>
    <lineage>
        <taxon>Bacteria</taxon>
        <taxon>Pseudomonadati</taxon>
        <taxon>Pseudomonadota</taxon>
        <taxon>Alphaproteobacteria</taxon>
        <taxon>Rickettsiales</taxon>
        <taxon>Rickettsiaceae</taxon>
        <taxon>Rickettsieae</taxon>
        <taxon>Rickettsia</taxon>
        <taxon>spotted fever group</taxon>
    </lineage>
</organism>